<dbReference type="EMBL" id="U85398">
    <property type="protein sequence ID" value="AAB41645.1"/>
    <property type="molecule type" value="mRNA"/>
</dbReference>
<dbReference type="SMR" id="P90513"/>
<dbReference type="VEuPathDB" id="AmoebaDB:ACA1_072980"/>
<dbReference type="GO" id="GO:0005737">
    <property type="term" value="C:cytoplasm"/>
    <property type="evidence" value="ECO:0007669"/>
    <property type="project" value="UniProtKB-SubCell"/>
</dbReference>
<dbReference type="GO" id="GO:0005634">
    <property type="term" value="C:nucleus"/>
    <property type="evidence" value="ECO:0007669"/>
    <property type="project" value="UniProtKB-SubCell"/>
</dbReference>
<dbReference type="GO" id="GO:0019773">
    <property type="term" value="C:proteasome core complex, alpha-subunit complex"/>
    <property type="evidence" value="ECO:0000250"/>
    <property type="project" value="UniProtKB"/>
</dbReference>
<dbReference type="GO" id="GO:0010498">
    <property type="term" value="P:proteasomal protein catabolic process"/>
    <property type="evidence" value="ECO:0007669"/>
    <property type="project" value="UniProtKB-ARBA"/>
</dbReference>
<dbReference type="GO" id="GO:0006511">
    <property type="term" value="P:ubiquitin-dependent protein catabolic process"/>
    <property type="evidence" value="ECO:0007669"/>
    <property type="project" value="InterPro"/>
</dbReference>
<dbReference type="CDD" id="cd03751">
    <property type="entry name" value="proteasome_alpha_type_3"/>
    <property type="match status" value="1"/>
</dbReference>
<dbReference type="FunFam" id="3.60.20.10:FF:000007">
    <property type="entry name" value="Proteasome subunit alpha type"/>
    <property type="match status" value="1"/>
</dbReference>
<dbReference type="Gene3D" id="3.60.20.10">
    <property type="entry name" value="Glutamine Phosphoribosylpyrophosphate, subunit 1, domain 1"/>
    <property type="match status" value="1"/>
</dbReference>
<dbReference type="InterPro" id="IPR029055">
    <property type="entry name" value="Ntn_hydrolases_N"/>
</dbReference>
<dbReference type="InterPro" id="IPR050115">
    <property type="entry name" value="Proteasome_alpha"/>
</dbReference>
<dbReference type="InterPro" id="IPR023332">
    <property type="entry name" value="Proteasome_alpha-type"/>
</dbReference>
<dbReference type="InterPro" id="IPR000426">
    <property type="entry name" value="Proteasome_asu_N"/>
</dbReference>
<dbReference type="InterPro" id="IPR001353">
    <property type="entry name" value="Proteasome_sua/b"/>
</dbReference>
<dbReference type="PANTHER" id="PTHR11599">
    <property type="entry name" value="PROTEASOME SUBUNIT ALPHA/BETA"/>
    <property type="match status" value="1"/>
</dbReference>
<dbReference type="Pfam" id="PF00227">
    <property type="entry name" value="Proteasome"/>
    <property type="match status" value="1"/>
</dbReference>
<dbReference type="Pfam" id="PF10584">
    <property type="entry name" value="Proteasome_A_N"/>
    <property type="match status" value="1"/>
</dbReference>
<dbReference type="SMART" id="SM00948">
    <property type="entry name" value="Proteasome_A_N"/>
    <property type="match status" value="1"/>
</dbReference>
<dbReference type="SUPFAM" id="SSF56235">
    <property type="entry name" value="N-terminal nucleophile aminohydrolases (Ntn hydrolases)"/>
    <property type="match status" value="1"/>
</dbReference>
<dbReference type="PROSITE" id="PS00388">
    <property type="entry name" value="PROTEASOME_ALPHA_1"/>
    <property type="match status" value="1"/>
</dbReference>
<dbReference type="PROSITE" id="PS51475">
    <property type="entry name" value="PROTEASOME_ALPHA_2"/>
    <property type="match status" value="1"/>
</dbReference>
<proteinExistence type="evidence at transcript level"/>
<evidence type="ECO:0000250" key="1"/>
<evidence type="ECO:0000255" key="2">
    <source>
        <dbReference type="PROSITE-ProRule" id="PRU00808"/>
    </source>
</evidence>
<accession>P90513</accession>
<feature type="chain" id="PRO_0000124094" description="Proteasome subunit alpha type-3">
    <location>
        <begin position="1" status="less than"/>
        <end position="252"/>
    </location>
</feature>
<feature type="non-terminal residue">
    <location>
        <position position="1"/>
    </location>
</feature>
<comment type="function">
    <text>The proteasome is a multicatalytic proteinase complex which is characterized by its ability to cleave peptides with Arg, Phe, Tyr, Leu, and Glu adjacent to the leaving group at neutral or slightly basic pH. The proteasome has an ATP-dependent proteolytic activity.</text>
</comment>
<comment type="subunit">
    <text evidence="1">The 26S proteasome consists of a 20S proteasome core and two 19S regulatory subunits. The 20S proteasome core is composed of 28 subunits that are arranged in four stacked rings, resulting in a barrel-shaped structure. The two end rings are each formed by seven alpha subunits, and the two central rings are each formed by seven beta subunits. The catalytic chamber with the active sites is on the inside of the barrel (By similarity).</text>
</comment>
<comment type="subcellular location">
    <subcellularLocation>
        <location evidence="1">Cytoplasm</location>
    </subcellularLocation>
    <subcellularLocation>
        <location evidence="1">Nucleus</location>
    </subcellularLocation>
</comment>
<comment type="similarity">
    <text evidence="2">Belongs to the peptidase T1A family.</text>
</comment>
<keyword id="KW-0963">Cytoplasm</keyword>
<keyword id="KW-0539">Nucleus</keyword>
<keyword id="KW-0647">Proteasome</keyword>
<organism>
    <name type="scientific">Acanthamoeba castellanii</name>
    <name type="common">Amoeba</name>
    <dbReference type="NCBI Taxonomy" id="5755"/>
    <lineage>
        <taxon>Eukaryota</taxon>
        <taxon>Amoebozoa</taxon>
        <taxon>Discosea</taxon>
        <taxon>Longamoebia</taxon>
        <taxon>Centramoebida</taxon>
        <taxon>Acanthamoebidae</taxon>
        <taxon>Acanthamoeba</taxon>
    </lineage>
</organism>
<sequence>SIGTGYDLSSTTFSPDGRVFQVEYAAKAVDNSGTALGLRVKDGVVLAVEKLLVSKMLVPNTNRRIHTVDRHCGLAMSGLVADGRQLVSRGRAEATSYREFYGTDISGKVLNERLSNFVQLYSLYGSVRPFGTSVILGCVDKNGPQLYMIEPSGISWGYFGVAIGKGARAAKTEIEKLKLSEMTAREAIKEAAKIIYSVHDDAKDKAFELELSWVCEETGNLHKFVPKDLLEEAEKYAKQALEEEEDMSEEED</sequence>
<reference key="1">
    <citation type="submission" date="1997-02" db="EMBL/GenBank/DDBJ databases">
        <authorList>
            <person name="Xu P."/>
            <person name="Zot H.G."/>
        </authorList>
    </citation>
    <scope>NUCLEOTIDE SEQUENCE [MRNA]</scope>
</reference>
<name>PSA3_ACACA</name>
<protein>
    <recommendedName>
        <fullName>Proteasome subunit alpha type-3</fullName>
    </recommendedName>
</protein>